<feature type="chain" id="PRO_1000134785" description="Transcriptional regulator MraZ">
    <location>
        <begin position="1"/>
        <end position="142"/>
    </location>
</feature>
<feature type="domain" description="SpoVT-AbrB 1" evidence="2">
    <location>
        <begin position="5"/>
        <end position="51"/>
    </location>
</feature>
<feature type="domain" description="SpoVT-AbrB 2" evidence="2">
    <location>
        <begin position="77"/>
        <end position="120"/>
    </location>
</feature>
<evidence type="ECO:0000255" key="1">
    <source>
        <dbReference type="HAMAP-Rule" id="MF_01008"/>
    </source>
</evidence>
<evidence type="ECO:0000255" key="2">
    <source>
        <dbReference type="PROSITE-ProRule" id="PRU01076"/>
    </source>
</evidence>
<accession>A9BUJ7</accession>
<gene>
    <name evidence="1" type="primary">mraZ</name>
    <name type="ordered locus">Daci_1461</name>
</gene>
<comment type="subunit">
    <text evidence="1">Forms oligomers.</text>
</comment>
<comment type="subcellular location">
    <subcellularLocation>
        <location evidence="1">Cytoplasm</location>
        <location evidence="1">Nucleoid</location>
    </subcellularLocation>
</comment>
<comment type="similarity">
    <text evidence="1">Belongs to the MraZ family.</text>
</comment>
<protein>
    <recommendedName>
        <fullName>Transcriptional regulator MraZ</fullName>
    </recommendedName>
</protein>
<sequence length="142" mass="16075">MFQGASSLNLDGKGRLSVPTRHRDALVAMAQGQVTLTKHPHGCLMLFPRTEWLQFRERIAQLPMSAQWWKRIFLGNAMDVDMDATGRVLVSPELREAVGLTKEVVLLGMGNHFELWDKATYEAHEAKAMQEEMPAAFQDFAF</sequence>
<dbReference type="EMBL" id="CP000884">
    <property type="protein sequence ID" value="ABX34105.1"/>
    <property type="molecule type" value="Genomic_DNA"/>
</dbReference>
<dbReference type="RefSeq" id="WP_012203391.1">
    <property type="nucleotide sequence ID" value="NC_010002.1"/>
</dbReference>
<dbReference type="SMR" id="A9BUJ7"/>
<dbReference type="STRING" id="398578.Daci_1461"/>
<dbReference type="GeneID" id="24117463"/>
<dbReference type="KEGG" id="dac:Daci_1461"/>
<dbReference type="eggNOG" id="COG2001">
    <property type="taxonomic scope" value="Bacteria"/>
</dbReference>
<dbReference type="HOGENOM" id="CLU_107907_2_1_4"/>
<dbReference type="Proteomes" id="UP000000784">
    <property type="component" value="Chromosome"/>
</dbReference>
<dbReference type="GO" id="GO:0005737">
    <property type="term" value="C:cytoplasm"/>
    <property type="evidence" value="ECO:0007669"/>
    <property type="project" value="UniProtKB-UniRule"/>
</dbReference>
<dbReference type="GO" id="GO:0009295">
    <property type="term" value="C:nucleoid"/>
    <property type="evidence" value="ECO:0007669"/>
    <property type="project" value="UniProtKB-SubCell"/>
</dbReference>
<dbReference type="GO" id="GO:0003700">
    <property type="term" value="F:DNA-binding transcription factor activity"/>
    <property type="evidence" value="ECO:0007669"/>
    <property type="project" value="UniProtKB-UniRule"/>
</dbReference>
<dbReference type="GO" id="GO:0000976">
    <property type="term" value="F:transcription cis-regulatory region binding"/>
    <property type="evidence" value="ECO:0007669"/>
    <property type="project" value="TreeGrafter"/>
</dbReference>
<dbReference type="GO" id="GO:2000143">
    <property type="term" value="P:negative regulation of DNA-templated transcription initiation"/>
    <property type="evidence" value="ECO:0007669"/>
    <property type="project" value="TreeGrafter"/>
</dbReference>
<dbReference type="CDD" id="cd16321">
    <property type="entry name" value="MraZ_C"/>
    <property type="match status" value="1"/>
</dbReference>
<dbReference type="CDD" id="cd16320">
    <property type="entry name" value="MraZ_N"/>
    <property type="match status" value="1"/>
</dbReference>
<dbReference type="Gene3D" id="3.40.1550.20">
    <property type="entry name" value="Transcriptional regulator MraZ domain"/>
    <property type="match status" value="1"/>
</dbReference>
<dbReference type="HAMAP" id="MF_01008">
    <property type="entry name" value="MraZ"/>
    <property type="match status" value="1"/>
</dbReference>
<dbReference type="InterPro" id="IPR003444">
    <property type="entry name" value="MraZ"/>
</dbReference>
<dbReference type="InterPro" id="IPR035644">
    <property type="entry name" value="MraZ_C"/>
</dbReference>
<dbReference type="InterPro" id="IPR020603">
    <property type="entry name" value="MraZ_dom"/>
</dbReference>
<dbReference type="InterPro" id="IPR035642">
    <property type="entry name" value="MraZ_N"/>
</dbReference>
<dbReference type="InterPro" id="IPR038619">
    <property type="entry name" value="MraZ_sf"/>
</dbReference>
<dbReference type="InterPro" id="IPR007159">
    <property type="entry name" value="SpoVT-AbrB_dom"/>
</dbReference>
<dbReference type="InterPro" id="IPR037914">
    <property type="entry name" value="SpoVT-AbrB_sf"/>
</dbReference>
<dbReference type="NCBIfam" id="TIGR00242">
    <property type="entry name" value="division/cell wall cluster transcriptional repressor MraZ"/>
    <property type="match status" value="1"/>
</dbReference>
<dbReference type="PANTHER" id="PTHR34701">
    <property type="entry name" value="TRANSCRIPTIONAL REGULATOR MRAZ"/>
    <property type="match status" value="1"/>
</dbReference>
<dbReference type="PANTHER" id="PTHR34701:SF1">
    <property type="entry name" value="TRANSCRIPTIONAL REGULATOR MRAZ"/>
    <property type="match status" value="1"/>
</dbReference>
<dbReference type="Pfam" id="PF02381">
    <property type="entry name" value="MraZ"/>
    <property type="match status" value="2"/>
</dbReference>
<dbReference type="SUPFAM" id="SSF89447">
    <property type="entry name" value="AbrB/MazE/MraZ-like"/>
    <property type="match status" value="1"/>
</dbReference>
<dbReference type="PROSITE" id="PS51740">
    <property type="entry name" value="SPOVT_ABRB"/>
    <property type="match status" value="2"/>
</dbReference>
<keyword id="KW-0963">Cytoplasm</keyword>
<keyword id="KW-0238">DNA-binding</keyword>
<keyword id="KW-1185">Reference proteome</keyword>
<keyword id="KW-0677">Repeat</keyword>
<keyword id="KW-0804">Transcription</keyword>
<keyword id="KW-0805">Transcription regulation</keyword>
<name>MRAZ_DELAS</name>
<proteinExistence type="inferred from homology"/>
<organism>
    <name type="scientific">Delftia acidovorans (strain DSM 14801 / SPH-1)</name>
    <dbReference type="NCBI Taxonomy" id="398578"/>
    <lineage>
        <taxon>Bacteria</taxon>
        <taxon>Pseudomonadati</taxon>
        <taxon>Pseudomonadota</taxon>
        <taxon>Betaproteobacteria</taxon>
        <taxon>Burkholderiales</taxon>
        <taxon>Comamonadaceae</taxon>
        <taxon>Delftia</taxon>
    </lineage>
</organism>
<reference key="1">
    <citation type="submission" date="2007-11" db="EMBL/GenBank/DDBJ databases">
        <title>Complete sequence of Delftia acidovorans DSM 14801 / SPH-1.</title>
        <authorList>
            <person name="Copeland A."/>
            <person name="Lucas S."/>
            <person name="Lapidus A."/>
            <person name="Barry K."/>
            <person name="Glavina del Rio T."/>
            <person name="Dalin E."/>
            <person name="Tice H."/>
            <person name="Pitluck S."/>
            <person name="Lowry S."/>
            <person name="Clum A."/>
            <person name="Schmutz J."/>
            <person name="Larimer F."/>
            <person name="Land M."/>
            <person name="Hauser L."/>
            <person name="Kyrpides N."/>
            <person name="Kim E."/>
            <person name="Schleheck D."/>
            <person name="Richardson P."/>
        </authorList>
    </citation>
    <scope>NUCLEOTIDE SEQUENCE [LARGE SCALE GENOMIC DNA]</scope>
    <source>
        <strain>DSM 14801 / SPH-1</strain>
    </source>
</reference>